<reference key="1">
    <citation type="journal article" date="2003" name="J. Biol. Chem.">
        <title>Proanthocyanidin biosynthesis in plants. Purification of legume leucoanthocyanidin reductase and molecular cloning of its cDNA.</title>
        <authorList>
            <person name="Tanner G.J."/>
            <person name="Francki K.T."/>
            <person name="Abrahams S."/>
            <person name="Watson J.M."/>
            <person name="Larkin P.J."/>
            <person name="Ashton A.R."/>
        </authorList>
    </citation>
    <scope>NUCLEOTIDE SEQUENCE [MRNA]</scope>
    <source>
        <strain>cv. Chardonnay</strain>
        <tissue>Leaf</tissue>
    </source>
</reference>
<reference key="2">
    <citation type="journal article" date="2006" name="Plant Physiol. Biochem.">
        <title>Biosynthesis of flavan 3-ols by leucoanthocyanidin 4-reductases and anthocyanidin reductases in leaves of grape (Vitis vinifera L.), apple (Malus x domestica Borkh.) and other crops.</title>
        <authorList>
            <person name="Pfeiffer J."/>
            <person name="Kuhnel C."/>
            <person name="Brandt J."/>
            <person name="Duy D."/>
            <person name="Punyasiri P.A."/>
            <person name="Forkmann G."/>
            <person name="Fischer T.C."/>
        </authorList>
    </citation>
    <scope>NUCLEOTIDE SEQUENCE [MRNA]</scope>
    <scope>FUNCTION</scope>
    <scope>BIOPHYSICOCHEMICAL PROPERTIES</scope>
    <scope>TISSUE SPECIFICITY</scope>
    <source>
        <strain>cv. Regent</strain>
        <strain>cv. Spaetburgunder</strain>
    </source>
</reference>
<protein>
    <recommendedName>
        <fullName evidence="6">Anthocyanidin reductase ((2S)-flavan-3-ol-forming)</fullName>
        <shortName evidence="6">VvANR</shortName>
        <ecNumber evidence="3">1.3.1.112</ecNumber>
    </recommendedName>
    <alternativeName>
        <fullName evidence="5">Protein BANYULS</fullName>
        <shortName evidence="5">VvBAN</shortName>
    </alternativeName>
</protein>
<organism evidence="8">
    <name type="scientific">Vitis vinifera</name>
    <name type="common">Grape</name>
    <dbReference type="NCBI Taxonomy" id="29760"/>
    <lineage>
        <taxon>Eukaryota</taxon>
        <taxon>Viridiplantae</taxon>
        <taxon>Streptophyta</taxon>
        <taxon>Embryophyta</taxon>
        <taxon>Tracheophyta</taxon>
        <taxon>Spermatophyta</taxon>
        <taxon>Magnoliopsida</taxon>
        <taxon>eudicotyledons</taxon>
        <taxon>Gunneridae</taxon>
        <taxon>Pentapetalae</taxon>
        <taxon>rosids</taxon>
        <taxon>Vitales</taxon>
        <taxon>Vitaceae</taxon>
        <taxon>Viteae</taxon>
        <taxon>Vitis</taxon>
    </lineage>
</organism>
<proteinExistence type="evidence at protein level"/>
<comment type="function">
    <text evidence="3 4">Produces the terminal flavan-3-ol monomers required for the formation of proanthocyanidins or condensed tannins in leaves and flowers, as well as in the skin and seeds of developing berries (By similarity). Behaves as a reductase and as a C-3 epimerase (By similarity). Catalyzes the double reduction of anthocyanidins, producing a mixture of (2S,3S)- and (2S,3R)-flavan-3-ols (By similarity). The enzyme catalyzes sequential hydride transfers to C-2 and C-4, respectively and epimerization at C-3 is achieved by tautomerization that occurs between the two hydride transfers (By similarity). Converts cyanidin, pelargonidin and delphinidin into catechin and epicatechin, afzelechin and epiafzelechin, and gallocatechin and epigallocatechin respectively (PubMed:16806954).</text>
</comment>
<comment type="catalytic activity">
    <reaction evidence="3">
        <text>a (2S,3R)-flavan-3-ol + 2 NADP(+) = an anthocyanidin with a 3-hydroxy group + 2 NADPH + 2 H(+)</text>
        <dbReference type="Rhea" id="RHEA:51416"/>
        <dbReference type="ChEBI" id="CHEBI:15378"/>
        <dbReference type="ChEBI" id="CHEBI:57783"/>
        <dbReference type="ChEBI" id="CHEBI:58349"/>
        <dbReference type="ChEBI" id="CHEBI:134087"/>
        <dbReference type="ChEBI" id="CHEBI:134088"/>
        <dbReference type="EC" id="1.3.1.112"/>
    </reaction>
</comment>
<comment type="catalytic activity">
    <reaction evidence="3">
        <text>a (2S,3S)-flavan-3-ol + 2 NADP(+) = an anthocyanidin with a 3-hydroxy group + 2 NADPH + 2 H(+)</text>
        <dbReference type="Rhea" id="RHEA:51420"/>
        <dbReference type="ChEBI" id="CHEBI:15378"/>
        <dbReference type="ChEBI" id="CHEBI:57783"/>
        <dbReference type="ChEBI" id="CHEBI:58349"/>
        <dbReference type="ChEBI" id="CHEBI:134087"/>
        <dbReference type="ChEBI" id="CHEBI:134089"/>
        <dbReference type="EC" id="1.3.1.112"/>
    </reaction>
</comment>
<comment type="biophysicochemical properties">
    <phDependence>
        <text evidence="4">Optimum pH is 5.5.</text>
    </phDependence>
    <temperatureDependence>
        <text evidence="4">Optimum temperature is 45 degrees Celsius.</text>
    </temperatureDependence>
</comment>
<comment type="pathway">
    <text evidence="7">Secondary metabolite biosynthesis; flavonoid biosynthesis.</text>
</comment>
<comment type="tissue specificity">
    <text evidence="4">Expressed in leaves and grape berries.</text>
</comment>
<comment type="miscellaneous">
    <text evidence="3">Hyperbolic binding of NADPH and NADP(+) to the free enzyme, with a single binding site each. The most likely enzymatic mechanism is sequential ordered Bi-Uni-Uni-Bi, with NADPH binding first and NADP(+) released last.</text>
</comment>
<comment type="miscellaneous">
    <text evidence="3">This enzyme is strictly pro-S stereospecific and the reaction mechanism involves two hydride transfers from two distinct NADPH molecules.</text>
</comment>
<comment type="similarity">
    <text evidence="7">Belongs to the NAD(P)-dependent epimerase/dehydratase family. Dihydroflavonol-4-reductase subfamily.</text>
</comment>
<accession>Q7PCC4</accession>
<feature type="chain" id="PRO_0000438272" description="Anthocyanidin reductase ((2S)-flavan-3-ol-forming)">
    <location>
        <begin position="1"/>
        <end position="338"/>
    </location>
</feature>
<feature type="binding site" evidence="2">
    <location>
        <begin position="18"/>
        <end position="21"/>
    </location>
    <ligand>
        <name>NADP(+)</name>
        <dbReference type="ChEBI" id="CHEBI:58349"/>
    </ligand>
</feature>
<feature type="binding site" evidence="1">
    <location>
        <position position="48"/>
    </location>
    <ligand>
        <name>NADP(+)</name>
        <dbReference type="ChEBI" id="CHEBI:58349"/>
    </ligand>
</feature>
<feature type="binding site" evidence="2">
    <location>
        <begin position="87"/>
        <end position="90"/>
    </location>
    <ligand>
        <name>NADP(+)</name>
        <dbReference type="ChEBI" id="CHEBI:58349"/>
    </ligand>
</feature>
<feature type="binding site" evidence="1">
    <location>
        <position position="168"/>
    </location>
    <ligand>
        <name>NADP(+)</name>
        <dbReference type="ChEBI" id="CHEBI:58349"/>
    </ligand>
</feature>
<evidence type="ECO:0000250" key="1">
    <source>
        <dbReference type="UniProtKB" id="A0A059TC02"/>
    </source>
</evidence>
<evidence type="ECO:0000250" key="2">
    <source>
        <dbReference type="UniProtKB" id="P93799"/>
    </source>
</evidence>
<evidence type="ECO:0000250" key="3">
    <source>
        <dbReference type="UniProtKB" id="Q5FB34"/>
    </source>
</evidence>
<evidence type="ECO:0000269" key="4">
    <source>
    </source>
</evidence>
<evidence type="ECO:0000303" key="5">
    <source>
    </source>
</evidence>
<evidence type="ECO:0000303" key="6">
    <source>
    </source>
</evidence>
<evidence type="ECO:0000305" key="7"/>
<evidence type="ECO:0000312" key="8">
    <source>
        <dbReference type="EMBL" id="CAD91911.1"/>
    </source>
</evidence>
<name>ANRCH_VITVI</name>
<dbReference type="EC" id="1.3.1.112" evidence="3"/>
<dbReference type="EMBL" id="DQ129684">
    <property type="protein sequence ID" value="AAZ82409.1"/>
    <property type="molecule type" value="mRNA"/>
</dbReference>
<dbReference type="EMBL" id="BN000166">
    <property type="protein sequence ID" value="CAD91911.1"/>
    <property type="molecule type" value="mRNA"/>
</dbReference>
<dbReference type="RefSeq" id="NP_001267885.1">
    <property type="nucleotide sequence ID" value="NM_001280956.1"/>
</dbReference>
<dbReference type="SMR" id="Q7PCC4"/>
<dbReference type="GeneID" id="100232981"/>
<dbReference type="KEGG" id="vvi:100232981"/>
<dbReference type="OrthoDB" id="465617at71240"/>
<dbReference type="BioCyc" id="MetaCyc:MONOMER-19875"/>
<dbReference type="BRENDA" id="1.3.1.112">
    <property type="organism ID" value="6671"/>
</dbReference>
<dbReference type="UniPathway" id="UPA00154"/>
<dbReference type="ExpressionAtlas" id="Q7PCC4">
    <property type="expression patterns" value="baseline and differential"/>
</dbReference>
<dbReference type="GO" id="GO:0016491">
    <property type="term" value="F:oxidoreductase activity"/>
    <property type="evidence" value="ECO:0007669"/>
    <property type="project" value="UniProtKB-KW"/>
</dbReference>
<dbReference type="GO" id="GO:0009813">
    <property type="term" value="P:flavonoid biosynthetic process"/>
    <property type="evidence" value="ECO:0007669"/>
    <property type="project" value="UniProtKB-UniPathway"/>
</dbReference>
<dbReference type="CDD" id="cd05193">
    <property type="entry name" value="AR_like_SDR_e"/>
    <property type="match status" value="1"/>
</dbReference>
<dbReference type="FunFam" id="3.40.50.720:FF:000085">
    <property type="entry name" value="Dihydroflavonol reductase"/>
    <property type="match status" value="1"/>
</dbReference>
<dbReference type="Gene3D" id="3.40.50.720">
    <property type="entry name" value="NAD(P)-binding Rossmann-like Domain"/>
    <property type="match status" value="1"/>
</dbReference>
<dbReference type="InterPro" id="IPR001509">
    <property type="entry name" value="Epimerase_deHydtase"/>
</dbReference>
<dbReference type="InterPro" id="IPR036291">
    <property type="entry name" value="NAD(P)-bd_dom_sf"/>
</dbReference>
<dbReference type="InterPro" id="IPR050425">
    <property type="entry name" value="NAD(P)_dehydrat-like"/>
</dbReference>
<dbReference type="PANTHER" id="PTHR10366:SF288">
    <property type="entry name" value="ANTHOCYANIDIN REDUCTASE"/>
    <property type="match status" value="1"/>
</dbReference>
<dbReference type="PANTHER" id="PTHR10366">
    <property type="entry name" value="NAD DEPENDENT EPIMERASE/DEHYDRATASE"/>
    <property type="match status" value="1"/>
</dbReference>
<dbReference type="Pfam" id="PF01370">
    <property type="entry name" value="Epimerase"/>
    <property type="match status" value="1"/>
</dbReference>
<dbReference type="SUPFAM" id="SSF51735">
    <property type="entry name" value="NAD(P)-binding Rossmann-fold domains"/>
    <property type="match status" value="1"/>
</dbReference>
<gene>
    <name evidence="6" type="primary">ANR</name>
    <name evidence="5" type="synonym">BAN</name>
</gene>
<keyword id="KW-0284">Flavonoid biosynthesis</keyword>
<keyword id="KW-0521">NADP</keyword>
<keyword id="KW-0560">Oxidoreductase</keyword>
<sequence length="338" mass="36735">MATQHPIGKKTACVVGGTGFVASLLVKLLLQKGYAVNTTVRDPDNQKKVSHLLELQELGDLKIFRADLTDELSFEAPIAGCDFVFHVATPVHFASEDPENDMIKPAIQGVVNVMKACTRAKSVKRVILTSSAAAVTINQLDGTGLVVDEKNWTDIEFLTSAKPPTWGYPASKTLAEKAAWKFAEENNIDLITVIPTLMAGSSLTSDVPSSIGLAMSLITGNEFLINGMKGMQMLSGSVSIAHVEDVCQAHIFVAEKESASGRYICCAANTSVPELAKFLSKRYPQYKVPTDFGDFPPKSKLIISSEKLVKEGFSFKYGIEEIYDESVEYFKAKGLLQN</sequence>